<protein>
    <recommendedName>
        <fullName evidence="1">Quinolinate synthase</fullName>
        <ecNumber evidence="1">2.5.1.72</ecNumber>
    </recommendedName>
</protein>
<feature type="chain" id="PRO_1000024962" description="Quinolinate synthase">
    <location>
        <begin position="1"/>
        <end position="352"/>
    </location>
</feature>
<feature type="binding site" evidence="1">
    <location>
        <position position="48"/>
    </location>
    <ligand>
        <name>iminosuccinate</name>
        <dbReference type="ChEBI" id="CHEBI:77875"/>
    </ligand>
</feature>
<feature type="binding site" evidence="1">
    <location>
        <position position="69"/>
    </location>
    <ligand>
        <name>iminosuccinate</name>
        <dbReference type="ChEBI" id="CHEBI:77875"/>
    </ligand>
</feature>
<feature type="binding site" evidence="1">
    <location>
        <position position="114"/>
    </location>
    <ligand>
        <name>[4Fe-4S] cluster</name>
        <dbReference type="ChEBI" id="CHEBI:49883"/>
    </ligand>
</feature>
<feature type="binding site" evidence="1">
    <location>
        <begin position="140"/>
        <end position="142"/>
    </location>
    <ligand>
        <name>iminosuccinate</name>
        <dbReference type="ChEBI" id="CHEBI:77875"/>
    </ligand>
</feature>
<feature type="binding site" evidence="1">
    <location>
        <position position="157"/>
    </location>
    <ligand>
        <name>iminosuccinate</name>
        <dbReference type="ChEBI" id="CHEBI:77875"/>
    </ligand>
</feature>
<feature type="binding site" evidence="1">
    <location>
        <position position="201"/>
    </location>
    <ligand>
        <name>[4Fe-4S] cluster</name>
        <dbReference type="ChEBI" id="CHEBI:49883"/>
    </ligand>
</feature>
<feature type="binding site" evidence="1">
    <location>
        <begin position="227"/>
        <end position="229"/>
    </location>
    <ligand>
        <name>iminosuccinate</name>
        <dbReference type="ChEBI" id="CHEBI:77875"/>
    </ligand>
</feature>
<feature type="binding site" evidence="1">
    <location>
        <position position="244"/>
    </location>
    <ligand>
        <name>iminosuccinate</name>
        <dbReference type="ChEBI" id="CHEBI:77875"/>
    </ligand>
</feature>
<feature type="binding site" evidence="1">
    <location>
        <position position="298"/>
    </location>
    <ligand>
        <name>[4Fe-4S] cluster</name>
        <dbReference type="ChEBI" id="CHEBI:49883"/>
    </ligand>
</feature>
<gene>
    <name evidence="1" type="primary">nadA</name>
    <name type="ordered locus">PSEEN4071</name>
</gene>
<proteinExistence type="inferred from homology"/>
<reference key="1">
    <citation type="journal article" date="2006" name="Nat. Biotechnol.">
        <title>Complete genome sequence of the entomopathogenic and metabolically versatile soil bacterium Pseudomonas entomophila.</title>
        <authorList>
            <person name="Vodovar N."/>
            <person name="Vallenet D."/>
            <person name="Cruveiller S."/>
            <person name="Rouy Z."/>
            <person name="Barbe V."/>
            <person name="Acosta C."/>
            <person name="Cattolico L."/>
            <person name="Jubin C."/>
            <person name="Lajus A."/>
            <person name="Segurens B."/>
            <person name="Vacherie B."/>
            <person name="Wincker P."/>
            <person name="Weissenbach J."/>
            <person name="Lemaitre B."/>
            <person name="Medigue C."/>
            <person name="Boccard F."/>
        </authorList>
    </citation>
    <scope>NUCLEOTIDE SEQUENCE [LARGE SCALE GENOMIC DNA]</scope>
    <source>
        <strain>L48</strain>
    </source>
</reference>
<accession>Q1I6G9</accession>
<keyword id="KW-0004">4Fe-4S</keyword>
<keyword id="KW-0963">Cytoplasm</keyword>
<keyword id="KW-0408">Iron</keyword>
<keyword id="KW-0411">Iron-sulfur</keyword>
<keyword id="KW-0479">Metal-binding</keyword>
<keyword id="KW-0662">Pyridine nucleotide biosynthesis</keyword>
<keyword id="KW-0808">Transferase</keyword>
<dbReference type="EC" id="2.5.1.72" evidence="1"/>
<dbReference type="EMBL" id="CT573326">
    <property type="protein sequence ID" value="CAK16766.1"/>
    <property type="molecule type" value="Genomic_DNA"/>
</dbReference>
<dbReference type="RefSeq" id="WP_011535138.1">
    <property type="nucleotide sequence ID" value="NC_008027.1"/>
</dbReference>
<dbReference type="SMR" id="Q1I6G9"/>
<dbReference type="STRING" id="384676.PSEEN4071"/>
<dbReference type="GeneID" id="32807086"/>
<dbReference type="KEGG" id="pen:PSEEN4071"/>
<dbReference type="eggNOG" id="COG0379">
    <property type="taxonomic scope" value="Bacteria"/>
</dbReference>
<dbReference type="HOGENOM" id="CLU_047382_1_0_6"/>
<dbReference type="OrthoDB" id="9801204at2"/>
<dbReference type="UniPathway" id="UPA00253">
    <property type="reaction ID" value="UER00327"/>
</dbReference>
<dbReference type="Proteomes" id="UP000000658">
    <property type="component" value="Chromosome"/>
</dbReference>
<dbReference type="GO" id="GO:0005829">
    <property type="term" value="C:cytosol"/>
    <property type="evidence" value="ECO:0007669"/>
    <property type="project" value="TreeGrafter"/>
</dbReference>
<dbReference type="GO" id="GO:0051539">
    <property type="term" value="F:4 iron, 4 sulfur cluster binding"/>
    <property type="evidence" value="ECO:0007669"/>
    <property type="project" value="UniProtKB-KW"/>
</dbReference>
<dbReference type="GO" id="GO:0046872">
    <property type="term" value="F:metal ion binding"/>
    <property type="evidence" value="ECO:0007669"/>
    <property type="project" value="UniProtKB-KW"/>
</dbReference>
<dbReference type="GO" id="GO:0008987">
    <property type="term" value="F:quinolinate synthetase A activity"/>
    <property type="evidence" value="ECO:0007669"/>
    <property type="project" value="UniProtKB-UniRule"/>
</dbReference>
<dbReference type="GO" id="GO:0034628">
    <property type="term" value="P:'de novo' NAD biosynthetic process from L-aspartate"/>
    <property type="evidence" value="ECO:0007669"/>
    <property type="project" value="TreeGrafter"/>
</dbReference>
<dbReference type="FunFam" id="3.40.50.10800:FF:000001">
    <property type="entry name" value="Quinolinate synthase A"/>
    <property type="match status" value="1"/>
</dbReference>
<dbReference type="FunFam" id="3.40.50.10800:FF:000003">
    <property type="entry name" value="Quinolinate synthase A"/>
    <property type="match status" value="1"/>
</dbReference>
<dbReference type="Gene3D" id="3.40.50.10800">
    <property type="entry name" value="NadA-like"/>
    <property type="match status" value="3"/>
</dbReference>
<dbReference type="HAMAP" id="MF_00567">
    <property type="entry name" value="NadA_type1"/>
    <property type="match status" value="1"/>
</dbReference>
<dbReference type="InterPro" id="IPR003473">
    <property type="entry name" value="NadA"/>
</dbReference>
<dbReference type="InterPro" id="IPR036094">
    <property type="entry name" value="NadA_sf"/>
</dbReference>
<dbReference type="InterPro" id="IPR023513">
    <property type="entry name" value="Quinolinate_synth_A_type1"/>
</dbReference>
<dbReference type="NCBIfam" id="TIGR00550">
    <property type="entry name" value="nadA"/>
    <property type="match status" value="1"/>
</dbReference>
<dbReference type="NCBIfam" id="NF006877">
    <property type="entry name" value="PRK09375.1-1"/>
    <property type="match status" value="1"/>
</dbReference>
<dbReference type="NCBIfam" id="NF006878">
    <property type="entry name" value="PRK09375.1-2"/>
    <property type="match status" value="1"/>
</dbReference>
<dbReference type="PANTHER" id="PTHR30573:SF0">
    <property type="entry name" value="QUINOLINATE SYNTHASE, CHLOROPLASTIC"/>
    <property type="match status" value="1"/>
</dbReference>
<dbReference type="PANTHER" id="PTHR30573">
    <property type="entry name" value="QUINOLINATE SYNTHETASE A"/>
    <property type="match status" value="1"/>
</dbReference>
<dbReference type="Pfam" id="PF02445">
    <property type="entry name" value="NadA"/>
    <property type="match status" value="1"/>
</dbReference>
<dbReference type="SUPFAM" id="SSF142754">
    <property type="entry name" value="NadA-like"/>
    <property type="match status" value="1"/>
</dbReference>
<comment type="function">
    <text evidence="1">Catalyzes the condensation of iminoaspartate with dihydroxyacetone phosphate to form quinolinate.</text>
</comment>
<comment type="catalytic activity">
    <reaction evidence="1">
        <text>iminosuccinate + dihydroxyacetone phosphate = quinolinate + phosphate + 2 H2O + H(+)</text>
        <dbReference type="Rhea" id="RHEA:25888"/>
        <dbReference type="ChEBI" id="CHEBI:15377"/>
        <dbReference type="ChEBI" id="CHEBI:15378"/>
        <dbReference type="ChEBI" id="CHEBI:29959"/>
        <dbReference type="ChEBI" id="CHEBI:43474"/>
        <dbReference type="ChEBI" id="CHEBI:57642"/>
        <dbReference type="ChEBI" id="CHEBI:77875"/>
        <dbReference type="EC" id="2.5.1.72"/>
    </reaction>
    <physiologicalReaction direction="left-to-right" evidence="1">
        <dbReference type="Rhea" id="RHEA:25889"/>
    </physiologicalReaction>
</comment>
<comment type="cofactor">
    <cofactor evidence="1">
        <name>[4Fe-4S] cluster</name>
        <dbReference type="ChEBI" id="CHEBI:49883"/>
    </cofactor>
    <text evidence="1">Binds 1 [4Fe-4S] cluster per subunit.</text>
</comment>
<comment type="pathway">
    <text evidence="1">Cofactor biosynthesis; NAD(+) biosynthesis; quinolinate from iminoaspartate: step 1/1.</text>
</comment>
<comment type="subcellular location">
    <subcellularLocation>
        <location evidence="1">Cytoplasm</location>
    </subcellularLocation>
</comment>
<comment type="similarity">
    <text evidence="1">Belongs to the quinolinate synthase family. Type 1 subfamily.</text>
</comment>
<name>NADA_PSEE4</name>
<organism>
    <name type="scientific">Pseudomonas entomophila (strain L48)</name>
    <dbReference type="NCBI Taxonomy" id="384676"/>
    <lineage>
        <taxon>Bacteria</taxon>
        <taxon>Pseudomonadati</taxon>
        <taxon>Pseudomonadota</taxon>
        <taxon>Gammaproteobacteria</taxon>
        <taxon>Pseudomonadales</taxon>
        <taxon>Pseudomonadaceae</taxon>
        <taxon>Pseudomonas</taxon>
    </lineage>
</organism>
<sequence>MTQISERLLVQAHLDAKQSNPLTPEQEADYRAAIAAELKRQNAVLVAHYYCDPVIQALAEETGGCVSDSLEMARFGKNHSAETVVVAGVRFMGETAKILTPEKRVLMPTLEATCSLDLGCPVEAFSAFCDQHPERTVVVYANTSAAVKARADWVVTSSCALEIVESLMDNGETIIWGPDQHLGRYIQKQTGADMLLWDGACIVHEEFKSRQLADMKALYPDAAILVHPESPEAVIDLADAVGSTSQLIKAAQTLPNKTFIVATDRGIFYKMQQLCPDKEFVEAPTAGNGAACRSCAHCPWMAMNTLERVLDCLRQGSNEIFVEPALIPKAIKPLNRMLDFTQAARLKVSGNA</sequence>
<evidence type="ECO:0000255" key="1">
    <source>
        <dbReference type="HAMAP-Rule" id="MF_00567"/>
    </source>
</evidence>